<keyword id="KW-0963">Cytoplasm</keyword>
<keyword id="KW-0255">Endonuclease</keyword>
<keyword id="KW-0378">Hydrolase</keyword>
<keyword id="KW-0464">Manganese</keyword>
<keyword id="KW-0479">Metal-binding</keyword>
<keyword id="KW-0540">Nuclease</keyword>
<keyword id="KW-1185">Reference proteome</keyword>
<dbReference type="EC" id="3.1.26.4" evidence="1"/>
<dbReference type="EMBL" id="AM942759">
    <property type="protein sequence ID" value="CAR44495.1"/>
    <property type="molecule type" value="Genomic_DNA"/>
</dbReference>
<dbReference type="RefSeq" id="WP_004245458.1">
    <property type="nucleotide sequence ID" value="NC_010554.1"/>
</dbReference>
<dbReference type="SMR" id="B4F256"/>
<dbReference type="EnsemblBacteria" id="CAR44495">
    <property type="protein sequence ID" value="CAR44495"/>
    <property type="gene ID" value="PMI2271"/>
</dbReference>
<dbReference type="GeneID" id="6802576"/>
<dbReference type="KEGG" id="pmr:PMI2271"/>
<dbReference type="eggNOG" id="COG0164">
    <property type="taxonomic scope" value="Bacteria"/>
</dbReference>
<dbReference type="HOGENOM" id="CLU_036532_3_2_6"/>
<dbReference type="Proteomes" id="UP000008319">
    <property type="component" value="Chromosome"/>
</dbReference>
<dbReference type="GO" id="GO:0005737">
    <property type="term" value="C:cytoplasm"/>
    <property type="evidence" value="ECO:0007669"/>
    <property type="project" value="UniProtKB-SubCell"/>
</dbReference>
<dbReference type="GO" id="GO:0032299">
    <property type="term" value="C:ribonuclease H2 complex"/>
    <property type="evidence" value="ECO:0007669"/>
    <property type="project" value="TreeGrafter"/>
</dbReference>
<dbReference type="GO" id="GO:0030145">
    <property type="term" value="F:manganese ion binding"/>
    <property type="evidence" value="ECO:0007669"/>
    <property type="project" value="UniProtKB-UniRule"/>
</dbReference>
<dbReference type="GO" id="GO:0003723">
    <property type="term" value="F:RNA binding"/>
    <property type="evidence" value="ECO:0007669"/>
    <property type="project" value="InterPro"/>
</dbReference>
<dbReference type="GO" id="GO:0004523">
    <property type="term" value="F:RNA-DNA hybrid ribonuclease activity"/>
    <property type="evidence" value="ECO:0007669"/>
    <property type="project" value="UniProtKB-UniRule"/>
</dbReference>
<dbReference type="GO" id="GO:0043137">
    <property type="term" value="P:DNA replication, removal of RNA primer"/>
    <property type="evidence" value="ECO:0007669"/>
    <property type="project" value="TreeGrafter"/>
</dbReference>
<dbReference type="GO" id="GO:0006298">
    <property type="term" value="P:mismatch repair"/>
    <property type="evidence" value="ECO:0007669"/>
    <property type="project" value="TreeGrafter"/>
</dbReference>
<dbReference type="CDD" id="cd07182">
    <property type="entry name" value="RNase_HII_bacteria_HII_like"/>
    <property type="match status" value="1"/>
</dbReference>
<dbReference type="FunFam" id="3.30.420.10:FF:000006">
    <property type="entry name" value="Ribonuclease HII"/>
    <property type="match status" value="1"/>
</dbReference>
<dbReference type="Gene3D" id="3.30.420.10">
    <property type="entry name" value="Ribonuclease H-like superfamily/Ribonuclease H"/>
    <property type="match status" value="1"/>
</dbReference>
<dbReference type="HAMAP" id="MF_00052_B">
    <property type="entry name" value="RNase_HII_B"/>
    <property type="match status" value="1"/>
</dbReference>
<dbReference type="InterPro" id="IPR022898">
    <property type="entry name" value="RNase_HII"/>
</dbReference>
<dbReference type="InterPro" id="IPR001352">
    <property type="entry name" value="RNase_HII/HIII"/>
</dbReference>
<dbReference type="InterPro" id="IPR024567">
    <property type="entry name" value="RNase_HII/HIII_dom"/>
</dbReference>
<dbReference type="InterPro" id="IPR012337">
    <property type="entry name" value="RNaseH-like_sf"/>
</dbReference>
<dbReference type="InterPro" id="IPR036397">
    <property type="entry name" value="RNaseH_sf"/>
</dbReference>
<dbReference type="NCBIfam" id="NF000594">
    <property type="entry name" value="PRK00015.1-1"/>
    <property type="match status" value="1"/>
</dbReference>
<dbReference type="NCBIfam" id="NF000595">
    <property type="entry name" value="PRK00015.1-3"/>
    <property type="match status" value="1"/>
</dbReference>
<dbReference type="NCBIfam" id="NF000596">
    <property type="entry name" value="PRK00015.1-4"/>
    <property type="match status" value="1"/>
</dbReference>
<dbReference type="PANTHER" id="PTHR10954">
    <property type="entry name" value="RIBONUCLEASE H2 SUBUNIT A"/>
    <property type="match status" value="1"/>
</dbReference>
<dbReference type="PANTHER" id="PTHR10954:SF18">
    <property type="entry name" value="RIBONUCLEASE HII"/>
    <property type="match status" value="1"/>
</dbReference>
<dbReference type="Pfam" id="PF01351">
    <property type="entry name" value="RNase_HII"/>
    <property type="match status" value="1"/>
</dbReference>
<dbReference type="SUPFAM" id="SSF53098">
    <property type="entry name" value="Ribonuclease H-like"/>
    <property type="match status" value="1"/>
</dbReference>
<dbReference type="PROSITE" id="PS51975">
    <property type="entry name" value="RNASE_H_2"/>
    <property type="match status" value="1"/>
</dbReference>
<protein>
    <recommendedName>
        <fullName evidence="1">Ribonuclease HII</fullName>
        <shortName evidence="1">RNase HII</shortName>
        <ecNumber evidence="1">3.1.26.4</ecNumber>
    </recommendedName>
</protein>
<evidence type="ECO:0000255" key="1">
    <source>
        <dbReference type="HAMAP-Rule" id="MF_00052"/>
    </source>
</evidence>
<evidence type="ECO:0000255" key="2">
    <source>
        <dbReference type="PROSITE-ProRule" id="PRU01319"/>
    </source>
</evidence>
<feature type="chain" id="PRO_1000091642" description="Ribonuclease HII">
    <location>
        <begin position="1"/>
        <end position="196"/>
    </location>
</feature>
<feature type="domain" description="RNase H type-2" evidence="2">
    <location>
        <begin position="9"/>
        <end position="196"/>
    </location>
</feature>
<feature type="binding site" evidence="1">
    <location>
        <position position="15"/>
    </location>
    <ligand>
        <name>a divalent metal cation</name>
        <dbReference type="ChEBI" id="CHEBI:60240"/>
    </ligand>
</feature>
<feature type="binding site" evidence="1">
    <location>
        <position position="16"/>
    </location>
    <ligand>
        <name>a divalent metal cation</name>
        <dbReference type="ChEBI" id="CHEBI:60240"/>
    </ligand>
</feature>
<feature type="binding site" evidence="1">
    <location>
        <position position="107"/>
    </location>
    <ligand>
        <name>a divalent metal cation</name>
        <dbReference type="ChEBI" id="CHEBI:60240"/>
    </ligand>
</feature>
<proteinExistence type="inferred from homology"/>
<organism>
    <name type="scientific">Proteus mirabilis (strain HI4320)</name>
    <dbReference type="NCBI Taxonomy" id="529507"/>
    <lineage>
        <taxon>Bacteria</taxon>
        <taxon>Pseudomonadati</taxon>
        <taxon>Pseudomonadota</taxon>
        <taxon>Gammaproteobacteria</taxon>
        <taxon>Enterobacterales</taxon>
        <taxon>Morganellaceae</taxon>
        <taxon>Proteus</taxon>
    </lineage>
</organism>
<name>RNH2_PROMH</name>
<reference key="1">
    <citation type="journal article" date="2008" name="J. Bacteriol.">
        <title>Complete genome sequence of uropathogenic Proteus mirabilis, a master of both adherence and motility.</title>
        <authorList>
            <person name="Pearson M.M."/>
            <person name="Sebaihia M."/>
            <person name="Churcher C."/>
            <person name="Quail M.A."/>
            <person name="Seshasayee A.S."/>
            <person name="Luscombe N.M."/>
            <person name="Abdellah Z."/>
            <person name="Arrosmith C."/>
            <person name="Atkin B."/>
            <person name="Chillingworth T."/>
            <person name="Hauser H."/>
            <person name="Jagels K."/>
            <person name="Moule S."/>
            <person name="Mungall K."/>
            <person name="Norbertczak H."/>
            <person name="Rabbinowitsch E."/>
            <person name="Walker D."/>
            <person name="Whithead S."/>
            <person name="Thomson N.R."/>
            <person name="Rather P.N."/>
            <person name="Parkhill J."/>
            <person name="Mobley H.L.T."/>
        </authorList>
    </citation>
    <scope>NUCLEOTIDE SEQUENCE [LARGE SCALE GENOMIC DNA]</scope>
    <source>
        <strain>HI4320</strain>
    </source>
</reference>
<sequence>MEFVYPKANLIAGVDEVGRGPLVGAVVTAAVILDPANPIQGLMDSKKLTEKKRNALYDEIKEKALCWAIGRAEPEEIDKLNILWATMKAMERAVAGLSITPDMVLVDGNRCPNLPMASQAVIKGDSLVQEISAASILAKVTRDREMEQLDKLYPDYGFAKHKGYPTAFHMEKLASLGATPYHRKSFAPVKRALNLV</sequence>
<gene>
    <name evidence="1" type="primary">rnhB</name>
    <name type="ordered locus">PMI2271</name>
</gene>
<comment type="function">
    <text evidence="1">Endonuclease that specifically degrades the RNA of RNA-DNA hybrids.</text>
</comment>
<comment type="catalytic activity">
    <reaction evidence="1">
        <text>Endonucleolytic cleavage to 5'-phosphomonoester.</text>
        <dbReference type="EC" id="3.1.26.4"/>
    </reaction>
</comment>
<comment type="cofactor">
    <cofactor evidence="1">
        <name>Mn(2+)</name>
        <dbReference type="ChEBI" id="CHEBI:29035"/>
    </cofactor>
    <cofactor evidence="1">
        <name>Mg(2+)</name>
        <dbReference type="ChEBI" id="CHEBI:18420"/>
    </cofactor>
    <text evidence="1">Manganese or magnesium. Binds 1 divalent metal ion per monomer in the absence of substrate. May bind a second metal ion after substrate binding.</text>
</comment>
<comment type="subcellular location">
    <subcellularLocation>
        <location evidence="1">Cytoplasm</location>
    </subcellularLocation>
</comment>
<comment type="similarity">
    <text evidence="1">Belongs to the RNase HII family.</text>
</comment>
<accession>B4F256</accession>